<sequence>MKTLGEFIVEKQHEFSHATGELTALLSAIKLGAKIIHRDINKAGLVDILGASGVENVQGETQQKLDLFANEKLKAALKARDIVAGIASEEEDEIVVFEGCEHAKYVVLMDPLDGSSNIDVNVSVGTIFSIYRRVTPVGTPVTMEDFLQPGSQQVAAGYVVYGSSTMLVYTTGCGVHAFTYDPSLGVFCLCQERMRFPQSGNTYSINEGNYIKFPMGVKKYIKYCQEEDKATQRPYTSRYIGSLVADFHRNLLKGGIYLYPSTASHPEGKLRLLYECNPMAFLAEQAGGKASDGKQRILDIKPDSLHQRRPFFVGTEQMVNDVERFIREFPDA</sequence>
<comment type="catalytic activity">
    <reaction evidence="1">
        <text>beta-D-fructose 1,6-bisphosphate + H2O = beta-D-fructose 6-phosphate + phosphate</text>
        <dbReference type="Rhea" id="RHEA:11064"/>
        <dbReference type="ChEBI" id="CHEBI:15377"/>
        <dbReference type="ChEBI" id="CHEBI:32966"/>
        <dbReference type="ChEBI" id="CHEBI:43474"/>
        <dbReference type="ChEBI" id="CHEBI:57634"/>
        <dbReference type="EC" id="3.1.3.11"/>
    </reaction>
</comment>
<comment type="cofactor">
    <cofactor evidence="1">
        <name>Mg(2+)</name>
        <dbReference type="ChEBI" id="CHEBI:18420"/>
    </cofactor>
    <text evidence="1">Binds 2 magnesium ions per subunit.</text>
</comment>
<comment type="pathway">
    <text evidence="1">Carbohydrate biosynthesis; gluconeogenesis.</text>
</comment>
<comment type="subunit">
    <text evidence="1">Homotetramer.</text>
</comment>
<comment type="subcellular location">
    <subcellularLocation>
        <location evidence="1">Cytoplasm</location>
    </subcellularLocation>
</comment>
<comment type="similarity">
    <text evidence="1">Belongs to the FBPase class 1 family.</text>
</comment>
<gene>
    <name evidence="1" type="primary">fbp</name>
    <name type="ordered locus">ESA_00240</name>
</gene>
<keyword id="KW-0119">Carbohydrate metabolism</keyword>
<keyword id="KW-0963">Cytoplasm</keyword>
<keyword id="KW-0378">Hydrolase</keyword>
<keyword id="KW-0460">Magnesium</keyword>
<keyword id="KW-0479">Metal-binding</keyword>
<keyword id="KW-1185">Reference proteome</keyword>
<organism>
    <name type="scientific">Cronobacter sakazakii (strain ATCC BAA-894)</name>
    <name type="common">Enterobacter sakazakii</name>
    <dbReference type="NCBI Taxonomy" id="290339"/>
    <lineage>
        <taxon>Bacteria</taxon>
        <taxon>Pseudomonadati</taxon>
        <taxon>Pseudomonadota</taxon>
        <taxon>Gammaproteobacteria</taxon>
        <taxon>Enterobacterales</taxon>
        <taxon>Enterobacteriaceae</taxon>
        <taxon>Cronobacter</taxon>
    </lineage>
</organism>
<dbReference type="EC" id="3.1.3.11" evidence="1"/>
<dbReference type="EMBL" id="CP000783">
    <property type="protein sequence ID" value="ABU75541.1"/>
    <property type="molecule type" value="Genomic_DNA"/>
</dbReference>
<dbReference type="RefSeq" id="WP_012123724.1">
    <property type="nucleotide sequence ID" value="NC_009778.1"/>
</dbReference>
<dbReference type="SMR" id="A7MM48"/>
<dbReference type="GeneID" id="56733221"/>
<dbReference type="KEGG" id="esa:ESA_00240"/>
<dbReference type="HOGENOM" id="CLU_039977_2_2_6"/>
<dbReference type="UniPathway" id="UPA00138"/>
<dbReference type="Proteomes" id="UP000000260">
    <property type="component" value="Chromosome"/>
</dbReference>
<dbReference type="GO" id="GO:0005829">
    <property type="term" value="C:cytosol"/>
    <property type="evidence" value="ECO:0007669"/>
    <property type="project" value="TreeGrafter"/>
</dbReference>
<dbReference type="GO" id="GO:0042132">
    <property type="term" value="F:fructose 1,6-bisphosphate 1-phosphatase activity"/>
    <property type="evidence" value="ECO:0007669"/>
    <property type="project" value="UniProtKB-UniRule"/>
</dbReference>
<dbReference type="GO" id="GO:0000287">
    <property type="term" value="F:magnesium ion binding"/>
    <property type="evidence" value="ECO:0007669"/>
    <property type="project" value="UniProtKB-UniRule"/>
</dbReference>
<dbReference type="GO" id="GO:0030388">
    <property type="term" value="P:fructose 1,6-bisphosphate metabolic process"/>
    <property type="evidence" value="ECO:0007669"/>
    <property type="project" value="TreeGrafter"/>
</dbReference>
<dbReference type="GO" id="GO:0006002">
    <property type="term" value="P:fructose 6-phosphate metabolic process"/>
    <property type="evidence" value="ECO:0007669"/>
    <property type="project" value="TreeGrafter"/>
</dbReference>
<dbReference type="GO" id="GO:0006000">
    <property type="term" value="P:fructose metabolic process"/>
    <property type="evidence" value="ECO:0007669"/>
    <property type="project" value="TreeGrafter"/>
</dbReference>
<dbReference type="GO" id="GO:0006094">
    <property type="term" value="P:gluconeogenesis"/>
    <property type="evidence" value="ECO:0007669"/>
    <property type="project" value="UniProtKB-UniRule"/>
</dbReference>
<dbReference type="GO" id="GO:0005986">
    <property type="term" value="P:sucrose biosynthetic process"/>
    <property type="evidence" value="ECO:0007669"/>
    <property type="project" value="TreeGrafter"/>
</dbReference>
<dbReference type="CDD" id="cd00354">
    <property type="entry name" value="FBPase"/>
    <property type="match status" value="1"/>
</dbReference>
<dbReference type="FunFam" id="3.30.540.10:FF:000002">
    <property type="entry name" value="Fructose-1,6-bisphosphatase class 1"/>
    <property type="match status" value="1"/>
</dbReference>
<dbReference type="FunFam" id="3.40.190.80:FF:000001">
    <property type="entry name" value="Fructose-1,6-bisphosphatase class 1"/>
    <property type="match status" value="1"/>
</dbReference>
<dbReference type="Gene3D" id="3.40.190.80">
    <property type="match status" value="1"/>
</dbReference>
<dbReference type="Gene3D" id="3.30.540.10">
    <property type="entry name" value="Fructose-1,6-Bisphosphatase, subunit A, domain 1"/>
    <property type="match status" value="1"/>
</dbReference>
<dbReference type="HAMAP" id="MF_01855">
    <property type="entry name" value="FBPase_class1"/>
    <property type="match status" value="1"/>
</dbReference>
<dbReference type="InterPro" id="IPR044015">
    <property type="entry name" value="FBPase_C_dom"/>
</dbReference>
<dbReference type="InterPro" id="IPR000146">
    <property type="entry name" value="FBPase_class-1"/>
</dbReference>
<dbReference type="InterPro" id="IPR033391">
    <property type="entry name" value="FBPase_N"/>
</dbReference>
<dbReference type="InterPro" id="IPR028343">
    <property type="entry name" value="FBPtase"/>
</dbReference>
<dbReference type="InterPro" id="IPR020548">
    <property type="entry name" value="Fructose_bisphosphatase_AS"/>
</dbReference>
<dbReference type="NCBIfam" id="NF006778">
    <property type="entry name" value="PRK09293.1-1"/>
    <property type="match status" value="1"/>
</dbReference>
<dbReference type="NCBIfam" id="NF006779">
    <property type="entry name" value="PRK09293.1-3"/>
    <property type="match status" value="1"/>
</dbReference>
<dbReference type="PANTHER" id="PTHR11556">
    <property type="entry name" value="FRUCTOSE-1,6-BISPHOSPHATASE-RELATED"/>
    <property type="match status" value="1"/>
</dbReference>
<dbReference type="PANTHER" id="PTHR11556:SF35">
    <property type="entry name" value="SEDOHEPTULOSE-1,7-BISPHOSPHATASE, CHLOROPLASTIC"/>
    <property type="match status" value="1"/>
</dbReference>
<dbReference type="Pfam" id="PF00316">
    <property type="entry name" value="FBPase"/>
    <property type="match status" value="1"/>
</dbReference>
<dbReference type="Pfam" id="PF18913">
    <property type="entry name" value="FBPase_C"/>
    <property type="match status" value="1"/>
</dbReference>
<dbReference type="PIRSF" id="PIRSF500210">
    <property type="entry name" value="FBPtase"/>
    <property type="match status" value="1"/>
</dbReference>
<dbReference type="PIRSF" id="PIRSF000904">
    <property type="entry name" value="FBPtase_SBPase"/>
    <property type="match status" value="1"/>
</dbReference>
<dbReference type="PRINTS" id="PR00115">
    <property type="entry name" value="F16BPHPHTASE"/>
</dbReference>
<dbReference type="SUPFAM" id="SSF56655">
    <property type="entry name" value="Carbohydrate phosphatase"/>
    <property type="match status" value="1"/>
</dbReference>
<dbReference type="PROSITE" id="PS00124">
    <property type="entry name" value="FBPASE"/>
    <property type="match status" value="1"/>
</dbReference>
<reference key="1">
    <citation type="journal article" date="2010" name="PLoS ONE">
        <title>Genome sequence of Cronobacter sakazakii BAA-894 and comparative genomic hybridization analysis with other Cronobacter species.</title>
        <authorList>
            <person name="Kucerova E."/>
            <person name="Clifton S.W."/>
            <person name="Xia X.Q."/>
            <person name="Long F."/>
            <person name="Porwollik S."/>
            <person name="Fulton L."/>
            <person name="Fronick C."/>
            <person name="Minx P."/>
            <person name="Kyung K."/>
            <person name="Warren W."/>
            <person name="Fulton R."/>
            <person name="Feng D."/>
            <person name="Wollam A."/>
            <person name="Shah N."/>
            <person name="Bhonagiri V."/>
            <person name="Nash W.E."/>
            <person name="Hallsworth-Pepin K."/>
            <person name="Wilson R.K."/>
            <person name="McClelland M."/>
            <person name="Forsythe S.J."/>
        </authorList>
    </citation>
    <scope>NUCLEOTIDE SEQUENCE [LARGE SCALE GENOMIC DNA]</scope>
    <source>
        <strain>ATCC BAA-894</strain>
    </source>
</reference>
<evidence type="ECO:0000255" key="1">
    <source>
        <dbReference type="HAMAP-Rule" id="MF_01855"/>
    </source>
</evidence>
<feature type="chain" id="PRO_0000364541" description="Fructose-1,6-bisphosphatase class 1">
    <location>
        <begin position="1"/>
        <end position="332"/>
    </location>
</feature>
<feature type="binding site" evidence="1">
    <location>
        <position position="89"/>
    </location>
    <ligand>
        <name>Mg(2+)</name>
        <dbReference type="ChEBI" id="CHEBI:18420"/>
        <label>1</label>
    </ligand>
</feature>
<feature type="binding site" evidence="1">
    <location>
        <position position="110"/>
    </location>
    <ligand>
        <name>Mg(2+)</name>
        <dbReference type="ChEBI" id="CHEBI:18420"/>
        <label>1</label>
    </ligand>
</feature>
<feature type="binding site" evidence="1">
    <location>
        <position position="110"/>
    </location>
    <ligand>
        <name>Mg(2+)</name>
        <dbReference type="ChEBI" id="CHEBI:18420"/>
        <label>2</label>
    </ligand>
</feature>
<feature type="binding site" evidence="1">
    <location>
        <position position="112"/>
    </location>
    <ligand>
        <name>Mg(2+)</name>
        <dbReference type="ChEBI" id="CHEBI:18420"/>
        <label>1</label>
    </ligand>
</feature>
<feature type="binding site" evidence="1">
    <location>
        <begin position="113"/>
        <end position="116"/>
    </location>
    <ligand>
        <name>substrate</name>
    </ligand>
</feature>
<feature type="binding site" evidence="1">
    <location>
        <position position="113"/>
    </location>
    <ligand>
        <name>Mg(2+)</name>
        <dbReference type="ChEBI" id="CHEBI:18420"/>
        <label>2</label>
    </ligand>
</feature>
<feature type="binding site" evidence="1">
    <location>
        <position position="206"/>
    </location>
    <ligand>
        <name>substrate</name>
    </ligand>
</feature>
<feature type="binding site" evidence="1">
    <location>
        <position position="239"/>
    </location>
    <ligand>
        <name>substrate</name>
    </ligand>
</feature>
<feature type="binding site" evidence="1">
    <location>
        <begin position="257"/>
        <end position="259"/>
    </location>
    <ligand>
        <name>substrate</name>
    </ligand>
</feature>
<feature type="binding site" evidence="1">
    <location>
        <position position="269"/>
    </location>
    <ligand>
        <name>substrate</name>
    </ligand>
</feature>
<feature type="binding site" evidence="1">
    <location>
        <position position="275"/>
    </location>
    <ligand>
        <name>Mg(2+)</name>
        <dbReference type="ChEBI" id="CHEBI:18420"/>
        <label>2</label>
    </ligand>
</feature>
<protein>
    <recommendedName>
        <fullName evidence="1">Fructose-1,6-bisphosphatase class 1</fullName>
        <shortName evidence="1">FBPase class 1</shortName>
        <ecNumber evidence="1">3.1.3.11</ecNumber>
    </recommendedName>
    <alternativeName>
        <fullName evidence="1">D-fructose-1,6-bisphosphate 1-phosphohydrolase class 1</fullName>
    </alternativeName>
</protein>
<name>F16PA_CROS8</name>
<proteinExistence type="inferred from homology"/>
<accession>A7MM48</accession>